<keyword id="KW-0032">Aminotransferase</keyword>
<keyword id="KW-0046">Antibiotic resistance</keyword>
<keyword id="KW-0441">Lipid A biosynthesis</keyword>
<keyword id="KW-0444">Lipid biosynthesis</keyword>
<keyword id="KW-0443">Lipid metabolism</keyword>
<keyword id="KW-0448">Lipopolysaccharide biosynthesis</keyword>
<keyword id="KW-0663">Pyridoxal phosphate</keyword>
<keyword id="KW-0808">Transferase</keyword>
<organism>
    <name type="scientific">Escherichia coli O157:H7 (strain EC4115 / EHEC)</name>
    <dbReference type="NCBI Taxonomy" id="444450"/>
    <lineage>
        <taxon>Bacteria</taxon>
        <taxon>Pseudomonadati</taxon>
        <taxon>Pseudomonadota</taxon>
        <taxon>Gammaproteobacteria</taxon>
        <taxon>Enterobacterales</taxon>
        <taxon>Enterobacteriaceae</taxon>
        <taxon>Escherichia</taxon>
    </lineage>
</organism>
<feature type="chain" id="PRO_0000380525" description="UDP-4-amino-4-deoxy-L-arabinose--oxoglutarate aminotransferase">
    <location>
        <begin position="1"/>
        <end position="379"/>
    </location>
</feature>
<feature type="modified residue" description="N6-(pyridoxal phosphate)lysine" evidence="1">
    <location>
        <position position="182"/>
    </location>
</feature>
<protein>
    <recommendedName>
        <fullName evidence="1">UDP-4-amino-4-deoxy-L-arabinose--oxoglutarate aminotransferase</fullName>
        <ecNumber evidence="1">2.6.1.87</ecNumber>
    </recommendedName>
    <alternativeName>
        <fullName evidence="1">UDP-(beta-L-threo-pentapyranosyl-4''-ulose diphosphate) aminotransferase</fullName>
        <shortName evidence="1">UDP-Ara4O aminotransferase</shortName>
    </alternativeName>
    <alternativeName>
        <fullName evidence="1">UDP-4-amino-4-deoxy-L-arabinose aminotransferase</fullName>
    </alternativeName>
</protein>
<name>ARNB_ECO5E</name>
<dbReference type="EC" id="2.6.1.87" evidence="1"/>
<dbReference type="EMBL" id="CP001164">
    <property type="protein sequence ID" value="ACI36831.1"/>
    <property type="status" value="ALT_INIT"/>
    <property type="molecule type" value="Genomic_DNA"/>
</dbReference>
<dbReference type="RefSeq" id="WP_001303599.1">
    <property type="nucleotide sequence ID" value="NC_011353.1"/>
</dbReference>
<dbReference type="SMR" id="B5YX44"/>
<dbReference type="KEGG" id="ecf:ECH74115_3394"/>
<dbReference type="HOGENOM" id="CLU_033332_0_3_6"/>
<dbReference type="UniPathway" id="UPA00030"/>
<dbReference type="UniPathway" id="UPA00032">
    <property type="reaction ID" value="UER00493"/>
</dbReference>
<dbReference type="GO" id="GO:0016020">
    <property type="term" value="C:membrane"/>
    <property type="evidence" value="ECO:0007669"/>
    <property type="project" value="GOC"/>
</dbReference>
<dbReference type="GO" id="GO:0030170">
    <property type="term" value="F:pyridoxal phosphate binding"/>
    <property type="evidence" value="ECO:0007669"/>
    <property type="project" value="TreeGrafter"/>
</dbReference>
<dbReference type="GO" id="GO:0099620">
    <property type="term" value="F:UDP-4-amino-4-deoxy-L-arabinose aminotransferase"/>
    <property type="evidence" value="ECO:0007669"/>
    <property type="project" value="UniProtKB-EC"/>
</dbReference>
<dbReference type="GO" id="GO:0009245">
    <property type="term" value="P:lipid A biosynthetic process"/>
    <property type="evidence" value="ECO:0007669"/>
    <property type="project" value="UniProtKB-KW"/>
</dbReference>
<dbReference type="GO" id="GO:0009103">
    <property type="term" value="P:lipopolysaccharide biosynthetic process"/>
    <property type="evidence" value="ECO:0007669"/>
    <property type="project" value="UniProtKB-UniRule"/>
</dbReference>
<dbReference type="GO" id="GO:0046677">
    <property type="term" value="P:response to antibiotic"/>
    <property type="evidence" value="ECO:0007669"/>
    <property type="project" value="UniProtKB-KW"/>
</dbReference>
<dbReference type="CDD" id="cd00616">
    <property type="entry name" value="AHBA_syn"/>
    <property type="match status" value="1"/>
</dbReference>
<dbReference type="FunFam" id="3.40.640.10:FF:000040">
    <property type="entry name" value="UDP-4-amino-4-deoxy-L-arabinose--oxoglutarate aminotransferase"/>
    <property type="match status" value="1"/>
</dbReference>
<dbReference type="FunFam" id="3.90.1150.10:FF:000030">
    <property type="entry name" value="UDP-4-amino-4-deoxy-L-arabinose--oxoglutarate aminotransferase"/>
    <property type="match status" value="1"/>
</dbReference>
<dbReference type="Gene3D" id="3.90.1150.10">
    <property type="entry name" value="Aspartate Aminotransferase, domain 1"/>
    <property type="match status" value="1"/>
</dbReference>
<dbReference type="Gene3D" id="3.40.640.10">
    <property type="entry name" value="Type I PLP-dependent aspartate aminotransferase-like (Major domain)"/>
    <property type="match status" value="1"/>
</dbReference>
<dbReference type="HAMAP" id="MF_01167">
    <property type="entry name" value="ArnB_transfer"/>
    <property type="match status" value="1"/>
</dbReference>
<dbReference type="InterPro" id="IPR022850">
    <property type="entry name" value="ArnB_NH2Trfase"/>
</dbReference>
<dbReference type="InterPro" id="IPR000653">
    <property type="entry name" value="DegT/StrS_aminotransferase"/>
</dbReference>
<dbReference type="InterPro" id="IPR015424">
    <property type="entry name" value="PyrdxlP-dep_Trfase"/>
</dbReference>
<dbReference type="InterPro" id="IPR015421">
    <property type="entry name" value="PyrdxlP-dep_Trfase_major"/>
</dbReference>
<dbReference type="InterPro" id="IPR015422">
    <property type="entry name" value="PyrdxlP-dep_Trfase_small"/>
</dbReference>
<dbReference type="NCBIfam" id="NF008658">
    <property type="entry name" value="PRK11658.1"/>
    <property type="match status" value="1"/>
</dbReference>
<dbReference type="PANTHER" id="PTHR30244">
    <property type="entry name" value="TRANSAMINASE"/>
    <property type="match status" value="1"/>
</dbReference>
<dbReference type="PANTHER" id="PTHR30244:SF41">
    <property type="entry name" value="UDP-4-AMINO-4-DEOXY-L-ARABINOSE--OXOGLUTARATE AMINOTRANSFERASE"/>
    <property type="match status" value="1"/>
</dbReference>
<dbReference type="Pfam" id="PF01041">
    <property type="entry name" value="DegT_DnrJ_EryC1"/>
    <property type="match status" value="1"/>
</dbReference>
<dbReference type="PIRSF" id="PIRSF000390">
    <property type="entry name" value="PLP_StrS"/>
    <property type="match status" value="1"/>
</dbReference>
<dbReference type="SUPFAM" id="SSF53383">
    <property type="entry name" value="PLP-dependent transferases"/>
    <property type="match status" value="1"/>
</dbReference>
<gene>
    <name evidence="1" type="primary">arnB</name>
    <name type="ordered locus">ECH74115_3394</name>
</gene>
<sequence length="379" mass="41651">MSEFLPFSRPAMGVEELAAVKEVLESGWITTGPKNHALEQAFCQLTGNQHAIAVSSATAGMHITLMALEIGKGDEVITPSLTWVSTLNMISLQGATPVMVDVDRDTLMVTPEAIESAITPRTKAIIPVHYAGAPADINAIRAIGERYGIAVIEDAAHAVGTYYKGRHIGAKGTAIFSFHAIKNITCAEGGLIVTDNENIARQLRMLKFHGLGVDAYDRQTWGRAPQAEVLTPGYKYNLTDINAAIALTQLAKLEHLNTRRREIAQQYQQALAALPFQPLSLPAWPHVHAWHLFIIRVDEQRCGISRDALMEALKERGIGTGLHFRAAHTQKYYRERFPSLSLPNTEWNSERICSLPLFPDMTTADADRVITALQQLAGQ</sequence>
<proteinExistence type="inferred from homology"/>
<comment type="function">
    <text evidence="1">Catalyzes the conversion of UDP-4-keto-arabinose (UDP-Ara4O) to UDP-4-amino-4-deoxy-L-arabinose (UDP-L-Ara4N). The modified arabinose is attached to lipid A and is required for resistance to polymyxin and cationic antimicrobial peptides.</text>
</comment>
<comment type="catalytic activity">
    <reaction evidence="1">
        <text>UDP-4-amino-4-deoxy-beta-L-arabinose + 2-oxoglutarate = UDP-beta-L-threo-pentopyranos-4-ulose + L-glutamate</text>
        <dbReference type="Rhea" id="RHEA:24710"/>
        <dbReference type="ChEBI" id="CHEBI:16810"/>
        <dbReference type="ChEBI" id="CHEBI:29985"/>
        <dbReference type="ChEBI" id="CHEBI:58708"/>
        <dbReference type="ChEBI" id="CHEBI:58710"/>
        <dbReference type="EC" id="2.6.1.87"/>
    </reaction>
</comment>
<comment type="cofactor">
    <cofactor evidence="1">
        <name>pyridoxal 5'-phosphate</name>
        <dbReference type="ChEBI" id="CHEBI:597326"/>
    </cofactor>
</comment>
<comment type="pathway">
    <text evidence="1">Nucleotide-sugar biosynthesis; UDP-4-deoxy-4-formamido-beta-L-arabinose biosynthesis; UDP-4-deoxy-4-formamido-beta-L-arabinose from UDP-alpha-D-glucuronate: step 2/3.</text>
</comment>
<comment type="pathway">
    <text evidence="1">Bacterial outer membrane biogenesis; lipopolysaccharide biosynthesis.</text>
</comment>
<comment type="subunit">
    <text evidence="1">Homodimer.</text>
</comment>
<comment type="similarity">
    <text evidence="1">Belongs to the DegT/DnrJ/EryC1 family. ArnB subfamily.</text>
</comment>
<comment type="sequence caution" evidence="2">
    <conflict type="erroneous initiation">
        <sequence resource="EMBL-CDS" id="ACI36831"/>
    </conflict>
</comment>
<evidence type="ECO:0000255" key="1">
    <source>
        <dbReference type="HAMAP-Rule" id="MF_01167"/>
    </source>
</evidence>
<evidence type="ECO:0000305" key="2"/>
<reference key="1">
    <citation type="journal article" date="2011" name="Proc. Natl. Acad. Sci. U.S.A.">
        <title>Genomic anatomy of Escherichia coli O157:H7 outbreaks.</title>
        <authorList>
            <person name="Eppinger M."/>
            <person name="Mammel M.K."/>
            <person name="Leclerc J.E."/>
            <person name="Ravel J."/>
            <person name="Cebula T.A."/>
        </authorList>
    </citation>
    <scope>NUCLEOTIDE SEQUENCE [LARGE SCALE GENOMIC DNA]</scope>
    <source>
        <strain>EC4115 / EHEC</strain>
    </source>
</reference>
<accession>B5YX44</accession>